<organism>
    <name type="scientific">Alcaligenes xylosoxydans xylosoxydans</name>
    <name type="common">Achromobacter xylosoxidans</name>
    <dbReference type="NCBI Taxonomy" id="85698"/>
    <lineage>
        <taxon>Bacteria</taxon>
        <taxon>Pseudomonadati</taxon>
        <taxon>Pseudomonadota</taxon>
        <taxon>Betaproteobacteria</taxon>
        <taxon>Burkholderiales</taxon>
        <taxon>Alcaligenaceae</taxon>
        <taxon>Achromobacter</taxon>
    </lineage>
</organism>
<gene>
    <name type="primary">dan</name>
</gene>
<name>NDAD_ALCXX</name>
<reference key="1">
    <citation type="journal article" date="1995" name="Biosci. Biotechnol. Biochem.">
        <title>Cloning and sequencing of a gene encoding D-aminoacylase from Alcaligenes xylosoxydans subsp. xylosoxydans A-6 and expression of the gene in Escherichia coli.</title>
        <authorList>
            <person name="Wakayama M."/>
            <person name="Katsuno Y."/>
            <person name="Hayashi S."/>
            <person name="Miyamoto Y."/>
            <person name="Sakai K."/>
            <person name="Moriguchi M."/>
        </authorList>
    </citation>
    <scope>NUCLEOTIDE SEQUENCE [GENOMIC DNA]</scope>
    <scope>PARTIAL PROTEIN SEQUENCE</scope>
    <source>
        <strain>A-6</strain>
    </source>
</reference>
<dbReference type="EC" id="3.5.1.81"/>
<dbReference type="EMBL" id="S80683">
    <property type="protein sequence ID" value="AAB35881.1"/>
    <property type="molecule type" value="Genomic_DNA"/>
</dbReference>
<dbReference type="EMBL" id="D45918">
    <property type="protein sequence ID" value="BAA08349.1"/>
    <property type="molecule type" value="Genomic_DNA"/>
</dbReference>
<dbReference type="PIR" id="JC4394">
    <property type="entry name" value="JC4394"/>
</dbReference>
<dbReference type="RefSeq" id="WP_026385007.1">
    <property type="nucleotide sequence ID" value="NZ_JAKLXR010000018.1"/>
</dbReference>
<dbReference type="SMR" id="P72349"/>
<dbReference type="eggNOG" id="COG3653">
    <property type="taxonomic scope" value="Bacteria"/>
</dbReference>
<dbReference type="BRENDA" id="3.5.1.81">
    <property type="organism ID" value="238"/>
</dbReference>
<dbReference type="GO" id="GO:0005737">
    <property type="term" value="C:cytoplasm"/>
    <property type="evidence" value="ECO:0007669"/>
    <property type="project" value="UniProtKB-SubCell"/>
</dbReference>
<dbReference type="GO" id="GO:0047420">
    <property type="term" value="F:N-acyl-D-amino-acid deacylase activity"/>
    <property type="evidence" value="ECO:0007669"/>
    <property type="project" value="UniProtKB-EC"/>
</dbReference>
<dbReference type="CDD" id="cd01297">
    <property type="entry name" value="D-aminoacylase"/>
    <property type="match status" value="1"/>
</dbReference>
<dbReference type="Gene3D" id="3.30.1490.130">
    <property type="entry name" value="D-aminoacylase. Domain 3"/>
    <property type="match status" value="1"/>
</dbReference>
<dbReference type="Gene3D" id="3.20.20.140">
    <property type="entry name" value="Metal-dependent hydrolases"/>
    <property type="match status" value="1"/>
</dbReference>
<dbReference type="Gene3D" id="2.30.40.10">
    <property type="entry name" value="Urease, subunit C, domain 1"/>
    <property type="match status" value="1"/>
</dbReference>
<dbReference type="InterPro" id="IPR013108">
    <property type="entry name" value="Amidohydro_3"/>
</dbReference>
<dbReference type="InterPro" id="IPR023100">
    <property type="entry name" value="D-aminoacylase_insert_dom_sf"/>
</dbReference>
<dbReference type="InterPro" id="IPR011059">
    <property type="entry name" value="Metal-dep_hydrolase_composite"/>
</dbReference>
<dbReference type="InterPro" id="IPR032466">
    <property type="entry name" value="Metal_Hydrolase"/>
</dbReference>
<dbReference type="InterPro" id="IPR050378">
    <property type="entry name" value="Metallo-dep_Hydrolases_sf"/>
</dbReference>
<dbReference type="PANTHER" id="PTHR11647:SF1">
    <property type="entry name" value="COLLAPSIN RESPONSE MEDIATOR PROTEIN"/>
    <property type="match status" value="1"/>
</dbReference>
<dbReference type="PANTHER" id="PTHR11647">
    <property type="entry name" value="HYDRANTOINASE/DIHYDROPYRIMIDINASE FAMILY MEMBER"/>
    <property type="match status" value="1"/>
</dbReference>
<dbReference type="Pfam" id="PF07969">
    <property type="entry name" value="Amidohydro_3"/>
    <property type="match status" value="2"/>
</dbReference>
<dbReference type="SUPFAM" id="SSF51338">
    <property type="entry name" value="Composite domain of metallo-dependent hydrolases"/>
    <property type="match status" value="1"/>
</dbReference>
<dbReference type="SUPFAM" id="SSF51556">
    <property type="entry name" value="Metallo-dependent hydrolases"/>
    <property type="match status" value="1"/>
</dbReference>
<feature type="initiator methionine" description="Removed">
    <location>
        <position position="1"/>
    </location>
</feature>
<feature type="chain" id="PRO_0000182704" description="D-aminoacylase">
    <location>
        <begin position="2"/>
        <end position="484"/>
    </location>
</feature>
<sequence>MSQSDSQPFDLLLAGGTLIDGSNTPGRRADLGVRGDRIAAIGDLSDAAAHTRVDVSGLVVAPGFIDSHTHDDNYLLRRRDMTPKISQGVTTVVTGNCGISLAPLAHANPPAPLDLLDEGGSYRFERFADYLDALRATPAAVNAACMVGHSTLRAAVMPDLQRAATDEEIAAMRDLAEEAMASGAIGISTGAFYPPAARATTEEIIEVCRPLSAHGGIYATHMRDEGEHIVAALEETFRIGRELDVPVVISHHKVMGQPNFGRSRETLPLIEAAMARQDVSLDAYPYVAGSTMLKQDRVLLAGRTIITWCKPFPELSGRDLDEVAAERGKSKYDVVPELQPAGAIYFMMDEPDVQRILAFGPTMIGSDGLPHDERPHPRLWGTFPRVLGHYARDLGLFPLETAVWKMTGLTAARFGLAGRGQLQAGYFADLVVFDPATVADTATFEHPTERAAGIHSVYVNGAPVWQEQAFTGQHAGRVLARTAA</sequence>
<protein>
    <recommendedName>
        <fullName>D-aminoacylase</fullName>
        <ecNumber>3.5.1.81</ecNumber>
    </recommendedName>
    <alternativeName>
        <fullName>N-acyl-D-amino-acid deacylase</fullName>
    </alternativeName>
</protein>
<evidence type="ECO:0000305" key="1"/>
<comment type="function">
    <text>Has a wide specificity; hydrolyzes N-acyl derivative of neutral D-amino acids.</text>
</comment>
<comment type="catalytic activity">
    <reaction>
        <text>an N-acyl-D-amino acid + H2O = a D-alpha-amino acid + a carboxylate</text>
        <dbReference type="Rhea" id="RHEA:18309"/>
        <dbReference type="ChEBI" id="CHEBI:15377"/>
        <dbReference type="ChEBI" id="CHEBI:29067"/>
        <dbReference type="ChEBI" id="CHEBI:59871"/>
        <dbReference type="ChEBI" id="CHEBI:59876"/>
        <dbReference type="EC" id="3.5.1.81"/>
    </reaction>
</comment>
<comment type="cofactor">
    <cofactor>
        <name>Zn(2+)</name>
        <dbReference type="ChEBI" id="CHEBI:29105"/>
    </cofactor>
</comment>
<comment type="subcellular location">
    <subcellularLocation>
        <location>Cytoplasm</location>
    </subcellularLocation>
</comment>
<comment type="similarity">
    <text evidence="1">Belongs to the metallo-dependent hydrolases superfamily. N-acyl-D-amino-acid deacylase family.</text>
</comment>
<keyword id="KW-0963">Cytoplasm</keyword>
<keyword id="KW-0903">Direct protein sequencing</keyword>
<keyword id="KW-0378">Hydrolase</keyword>
<keyword id="KW-0862">Zinc</keyword>
<accession>P72349</accession>
<accession>O08051</accession>
<proteinExistence type="evidence at protein level"/>